<dbReference type="EC" id="7.-.-.-"/>
<dbReference type="EMBL" id="AE006914">
    <property type="protein sequence ID" value="AAL03611.1"/>
    <property type="molecule type" value="Genomic_DNA"/>
</dbReference>
<dbReference type="PIR" id="A97834">
    <property type="entry name" value="A97834"/>
</dbReference>
<dbReference type="RefSeq" id="WP_010977651.1">
    <property type="nucleotide sequence ID" value="NC_003103.1"/>
</dbReference>
<dbReference type="SMR" id="Q92GP9"/>
<dbReference type="GeneID" id="928220"/>
<dbReference type="KEGG" id="rco:RC1073"/>
<dbReference type="PATRIC" id="fig|272944.4.peg.1229"/>
<dbReference type="HOGENOM" id="CLU_000604_84_3_5"/>
<dbReference type="Proteomes" id="UP000000816">
    <property type="component" value="Chromosome"/>
</dbReference>
<dbReference type="GO" id="GO:0005886">
    <property type="term" value="C:plasma membrane"/>
    <property type="evidence" value="ECO:0007669"/>
    <property type="project" value="UniProtKB-SubCell"/>
</dbReference>
<dbReference type="GO" id="GO:0015421">
    <property type="term" value="F:ABC-type oligopeptide transporter activity"/>
    <property type="evidence" value="ECO:0007669"/>
    <property type="project" value="TreeGrafter"/>
</dbReference>
<dbReference type="GO" id="GO:0005524">
    <property type="term" value="F:ATP binding"/>
    <property type="evidence" value="ECO:0007669"/>
    <property type="project" value="UniProtKB-KW"/>
</dbReference>
<dbReference type="GO" id="GO:0016887">
    <property type="term" value="F:ATP hydrolysis activity"/>
    <property type="evidence" value="ECO:0007669"/>
    <property type="project" value="InterPro"/>
</dbReference>
<dbReference type="CDD" id="cd18575">
    <property type="entry name" value="ABC_6TM_bac_exporter_ABCB8_10_like"/>
    <property type="match status" value="1"/>
</dbReference>
<dbReference type="FunFam" id="3.40.50.300:FF:000218">
    <property type="entry name" value="Multidrug ABC transporter ATP-binding protein"/>
    <property type="match status" value="1"/>
</dbReference>
<dbReference type="Gene3D" id="1.20.1560.10">
    <property type="entry name" value="ABC transporter type 1, transmembrane domain"/>
    <property type="match status" value="1"/>
</dbReference>
<dbReference type="Gene3D" id="3.40.50.300">
    <property type="entry name" value="P-loop containing nucleotide triphosphate hydrolases"/>
    <property type="match status" value="1"/>
</dbReference>
<dbReference type="InterPro" id="IPR003593">
    <property type="entry name" value="AAA+_ATPase"/>
</dbReference>
<dbReference type="InterPro" id="IPR011527">
    <property type="entry name" value="ABC1_TM_dom"/>
</dbReference>
<dbReference type="InterPro" id="IPR036640">
    <property type="entry name" value="ABC1_TM_sf"/>
</dbReference>
<dbReference type="InterPro" id="IPR003439">
    <property type="entry name" value="ABC_transporter-like_ATP-bd"/>
</dbReference>
<dbReference type="InterPro" id="IPR017871">
    <property type="entry name" value="ABC_transporter-like_CS"/>
</dbReference>
<dbReference type="InterPro" id="IPR027417">
    <property type="entry name" value="P-loop_NTPase"/>
</dbReference>
<dbReference type="InterPro" id="IPR039421">
    <property type="entry name" value="Type_1_exporter"/>
</dbReference>
<dbReference type="PANTHER" id="PTHR43394:SF1">
    <property type="entry name" value="ATP-BINDING CASSETTE SUB-FAMILY B MEMBER 10, MITOCHONDRIAL"/>
    <property type="match status" value="1"/>
</dbReference>
<dbReference type="PANTHER" id="PTHR43394">
    <property type="entry name" value="ATP-DEPENDENT PERMEASE MDL1, MITOCHONDRIAL"/>
    <property type="match status" value="1"/>
</dbReference>
<dbReference type="Pfam" id="PF00664">
    <property type="entry name" value="ABC_membrane"/>
    <property type="match status" value="1"/>
</dbReference>
<dbReference type="Pfam" id="PF00005">
    <property type="entry name" value="ABC_tran"/>
    <property type="match status" value="1"/>
</dbReference>
<dbReference type="SMART" id="SM00382">
    <property type="entry name" value="AAA"/>
    <property type="match status" value="1"/>
</dbReference>
<dbReference type="SUPFAM" id="SSF90123">
    <property type="entry name" value="ABC transporter transmembrane region"/>
    <property type="match status" value="1"/>
</dbReference>
<dbReference type="SUPFAM" id="SSF52540">
    <property type="entry name" value="P-loop containing nucleoside triphosphate hydrolases"/>
    <property type="match status" value="1"/>
</dbReference>
<dbReference type="PROSITE" id="PS50929">
    <property type="entry name" value="ABC_TM1F"/>
    <property type="match status" value="1"/>
</dbReference>
<dbReference type="PROSITE" id="PS00211">
    <property type="entry name" value="ABC_TRANSPORTER_1"/>
    <property type="match status" value="1"/>
</dbReference>
<dbReference type="PROSITE" id="PS50893">
    <property type="entry name" value="ABC_TRANSPORTER_2"/>
    <property type="match status" value="1"/>
</dbReference>
<sequence length="576" mass="64641">MDIKLLYRLAKYLRCYKKDLIIVMISLLSVSASLLLIGSVFRNLVDKGLSKDHISSVDNSILYICLLIIILSIASFFRSYFINNVAEKAVNQIRKEAYSNLINYEIEEFEELKIGDIISRLTNDIDQISTLIVNFLSFFIRNSVMLIGSITLMFFESFKLASIVIITIPILLIPLIKFGKHVKVLSKKALESKSLLASDINETFNNIRAIYAFNHQINKIADFDTKLQNYLIYCKTRLKIRALFFAISIAVIFLAITLVVWIGASDIVKGHLSAGQIISFIYYAIIAGVSCGGIFELLSEMHLPVTALERIITIIDKTPIAHNNYLELNNSDPISIEFKNVDFTYHSRPNLRIINNMSLKINANKFLGIVGRSGAGKSTVIQLLLRFYRQENGTILINNQDITLLNPAEIRKLIAYVPQEASIFSGTIKSNIIFGNNEASDDEINEIIKITGIEEFAAKLHDGINAKIGERGVRLSGGQKQRIAIARALLRMPQILLLDEAMSALDTMSEQKLLESIKKIMRGNIIISIAHRISSIESADYILVIDKGGVVAEGSHNDLSKNSEIYRNICREQLTI</sequence>
<comment type="function">
    <text evidence="1">Part of an ABC transporter complex. Transmembrane domains (TMD) form a pore in the inner membrane and the ATP-binding domain (NBD) is responsible for energy generation (By similarity).</text>
</comment>
<comment type="subunit">
    <text evidence="1">Homodimer.</text>
</comment>
<comment type="subcellular location">
    <subcellularLocation>
        <location evidence="1">Cell inner membrane</location>
        <topology evidence="3">Multi-pass membrane protein</topology>
    </subcellularLocation>
</comment>
<comment type="domain">
    <text>The ATP-binding domain (NBD) and the transmembrane domain (TMD) are fused.</text>
</comment>
<comment type="similarity">
    <text evidence="4">Belongs to the ABC transporter superfamily.</text>
</comment>
<keyword id="KW-0067">ATP-binding</keyword>
<keyword id="KW-0997">Cell inner membrane</keyword>
<keyword id="KW-1003">Cell membrane</keyword>
<keyword id="KW-0472">Membrane</keyword>
<keyword id="KW-0547">Nucleotide-binding</keyword>
<keyword id="KW-1278">Translocase</keyword>
<keyword id="KW-0812">Transmembrane</keyword>
<keyword id="KW-1133">Transmembrane helix</keyword>
<keyword id="KW-0813">Transport</keyword>
<organism>
    <name type="scientific">Rickettsia conorii (strain ATCC VR-613 / Malish 7)</name>
    <dbReference type="NCBI Taxonomy" id="272944"/>
    <lineage>
        <taxon>Bacteria</taxon>
        <taxon>Pseudomonadati</taxon>
        <taxon>Pseudomonadota</taxon>
        <taxon>Alphaproteobacteria</taxon>
        <taxon>Rickettsiales</taxon>
        <taxon>Rickettsiaceae</taxon>
        <taxon>Rickettsieae</taxon>
        <taxon>Rickettsia</taxon>
        <taxon>spotted fever group</taxon>
    </lineage>
</organism>
<feature type="chain" id="PRO_0000278656" description="Putative export ATP-binding/permease protein RC1073">
    <location>
        <begin position="1"/>
        <end position="576"/>
    </location>
</feature>
<feature type="transmembrane region" description="Helical" evidence="3">
    <location>
        <begin position="21"/>
        <end position="41"/>
    </location>
</feature>
<feature type="transmembrane region" description="Helical" evidence="3">
    <location>
        <begin position="57"/>
        <end position="77"/>
    </location>
</feature>
<feature type="transmembrane region" description="Helical" evidence="3">
    <location>
        <begin position="135"/>
        <end position="155"/>
    </location>
</feature>
<feature type="transmembrane region" description="Helical" evidence="3">
    <location>
        <begin position="158"/>
        <end position="178"/>
    </location>
</feature>
<feature type="transmembrane region" description="Helical" evidence="3">
    <location>
        <begin position="242"/>
        <end position="262"/>
    </location>
</feature>
<feature type="transmembrane region" description="Helical" evidence="3">
    <location>
        <begin position="277"/>
        <end position="297"/>
    </location>
</feature>
<feature type="domain" description="ABC transmembrane type-1" evidence="3">
    <location>
        <begin position="20"/>
        <end position="303"/>
    </location>
</feature>
<feature type="domain" description="ABC transporter" evidence="2">
    <location>
        <begin position="336"/>
        <end position="572"/>
    </location>
</feature>
<feature type="binding site" evidence="2">
    <location>
        <begin position="371"/>
        <end position="378"/>
    </location>
    <ligand>
        <name>ATP</name>
        <dbReference type="ChEBI" id="CHEBI:30616"/>
    </ligand>
</feature>
<protein>
    <recommendedName>
        <fullName>Putative export ATP-binding/permease protein RC1073</fullName>
        <ecNumber>7.-.-.-</ecNumber>
    </recommendedName>
</protein>
<gene>
    <name type="ordered locus">RC1073</name>
</gene>
<reference key="1">
    <citation type="journal article" date="2001" name="Science">
        <title>Mechanisms of evolution in Rickettsia conorii and R. prowazekii.</title>
        <authorList>
            <person name="Ogata H."/>
            <person name="Audic S."/>
            <person name="Renesto-Audiffren P."/>
            <person name="Fournier P.-E."/>
            <person name="Barbe V."/>
            <person name="Samson D."/>
            <person name="Roux V."/>
            <person name="Cossart P."/>
            <person name="Weissenbach J."/>
            <person name="Claverie J.-M."/>
            <person name="Raoult D."/>
        </authorList>
    </citation>
    <scope>NUCLEOTIDE SEQUENCE [LARGE SCALE GENOMIC DNA]</scope>
    <source>
        <strain>ATCC VR-613 / Malish 7</strain>
    </source>
</reference>
<accession>Q92GP9</accession>
<name>Y1073_RICCN</name>
<evidence type="ECO:0000250" key="1"/>
<evidence type="ECO:0000255" key="2">
    <source>
        <dbReference type="PROSITE-ProRule" id="PRU00434"/>
    </source>
</evidence>
<evidence type="ECO:0000255" key="3">
    <source>
        <dbReference type="PROSITE-ProRule" id="PRU00441"/>
    </source>
</evidence>
<evidence type="ECO:0000305" key="4"/>
<proteinExistence type="inferred from homology"/>